<proteinExistence type="inferred from homology"/>
<dbReference type="EMBL" id="AL935263">
    <property type="protein sequence ID" value="CCC79553.1"/>
    <property type="molecule type" value="Genomic_DNA"/>
</dbReference>
<dbReference type="RefSeq" id="WP_003641442.1">
    <property type="nucleotide sequence ID" value="NC_004567.2"/>
</dbReference>
<dbReference type="RefSeq" id="YP_004890067.1">
    <property type="nucleotide sequence ID" value="NC_004567.2"/>
</dbReference>
<dbReference type="SMR" id="Q88UU2"/>
<dbReference type="STRING" id="220668.lp_2365"/>
<dbReference type="EnsemblBacteria" id="CCC79553">
    <property type="protein sequence ID" value="CCC79553"/>
    <property type="gene ID" value="lp_2365"/>
</dbReference>
<dbReference type="KEGG" id="lpl:lp_2365"/>
<dbReference type="PATRIC" id="fig|220668.9.peg.1998"/>
<dbReference type="eggNOG" id="COG0224">
    <property type="taxonomic scope" value="Bacteria"/>
</dbReference>
<dbReference type="HOGENOM" id="CLU_050669_0_1_9"/>
<dbReference type="OrthoDB" id="9812769at2"/>
<dbReference type="PhylomeDB" id="Q88UU2"/>
<dbReference type="Proteomes" id="UP000000432">
    <property type="component" value="Chromosome"/>
</dbReference>
<dbReference type="GO" id="GO:0005886">
    <property type="term" value="C:plasma membrane"/>
    <property type="evidence" value="ECO:0007669"/>
    <property type="project" value="UniProtKB-SubCell"/>
</dbReference>
<dbReference type="GO" id="GO:0045259">
    <property type="term" value="C:proton-transporting ATP synthase complex"/>
    <property type="evidence" value="ECO:0007669"/>
    <property type="project" value="UniProtKB-KW"/>
</dbReference>
<dbReference type="GO" id="GO:0005524">
    <property type="term" value="F:ATP binding"/>
    <property type="evidence" value="ECO:0007669"/>
    <property type="project" value="UniProtKB-UniRule"/>
</dbReference>
<dbReference type="GO" id="GO:0046933">
    <property type="term" value="F:proton-transporting ATP synthase activity, rotational mechanism"/>
    <property type="evidence" value="ECO:0007669"/>
    <property type="project" value="UniProtKB-UniRule"/>
</dbReference>
<dbReference type="GO" id="GO:0042777">
    <property type="term" value="P:proton motive force-driven plasma membrane ATP synthesis"/>
    <property type="evidence" value="ECO:0007669"/>
    <property type="project" value="UniProtKB-UniRule"/>
</dbReference>
<dbReference type="CDD" id="cd12151">
    <property type="entry name" value="F1-ATPase_gamma"/>
    <property type="match status" value="1"/>
</dbReference>
<dbReference type="Gene3D" id="3.40.1380.10">
    <property type="match status" value="1"/>
</dbReference>
<dbReference type="Gene3D" id="1.10.287.80">
    <property type="entry name" value="ATP synthase, gamma subunit, helix hairpin domain"/>
    <property type="match status" value="2"/>
</dbReference>
<dbReference type="HAMAP" id="MF_00815">
    <property type="entry name" value="ATP_synth_gamma_bact"/>
    <property type="match status" value="1"/>
</dbReference>
<dbReference type="InterPro" id="IPR035968">
    <property type="entry name" value="ATP_synth_F1_ATPase_gsu"/>
</dbReference>
<dbReference type="InterPro" id="IPR000131">
    <property type="entry name" value="ATP_synth_F1_gsu"/>
</dbReference>
<dbReference type="NCBIfam" id="TIGR01146">
    <property type="entry name" value="ATPsyn_F1gamma"/>
    <property type="match status" value="1"/>
</dbReference>
<dbReference type="NCBIfam" id="NF004147">
    <property type="entry name" value="PRK05621.2-1"/>
    <property type="match status" value="1"/>
</dbReference>
<dbReference type="PANTHER" id="PTHR11693">
    <property type="entry name" value="ATP SYNTHASE GAMMA CHAIN"/>
    <property type="match status" value="1"/>
</dbReference>
<dbReference type="PANTHER" id="PTHR11693:SF22">
    <property type="entry name" value="ATP SYNTHASE SUBUNIT GAMMA, MITOCHONDRIAL"/>
    <property type="match status" value="1"/>
</dbReference>
<dbReference type="Pfam" id="PF00231">
    <property type="entry name" value="ATP-synt"/>
    <property type="match status" value="1"/>
</dbReference>
<dbReference type="PRINTS" id="PR00126">
    <property type="entry name" value="ATPASEGAMMA"/>
</dbReference>
<dbReference type="SUPFAM" id="SSF52943">
    <property type="entry name" value="ATP synthase (F1-ATPase), gamma subunit"/>
    <property type="match status" value="1"/>
</dbReference>
<reference key="1">
    <citation type="journal article" date="2003" name="Proc. Natl. Acad. Sci. U.S.A.">
        <title>Complete genome sequence of Lactobacillus plantarum WCFS1.</title>
        <authorList>
            <person name="Kleerebezem M."/>
            <person name="Boekhorst J."/>
            <person name="van Kranenburg R."/>
            <person name="Molenaar D."/>
            <person name="Kuipers O.P."/>
            <person name="Leer R."/>
            <person name="Tarchini R."/>
            <person name="Peters S.A."/>
            <person name="Sandbrink H.M."/>
            <person name="Fiers M.W.E.J."/>
            <person name="Stiekema W."/>
            <person name="Klein Lankhorst R.M."/>
            <person name="Bron P.A."/>
            <person name="Hoffer S.M."/>
            <person name="Nierop Groot M.N."/>
            <person name="Kerkhoven R."/>
            <person name="De Vries M."/>
            <person name="Ursing B."/>
            <person name="De Vos W.M."/>
            <person name="Siezen R.J."/>
        </authorList>
    </citation>
    <scope>NUCLEOTIDE SEQUENCE [LARGE SCALE GENOMIC DNA]</scope>
    <source>
        <strain>ATCC BAA-793 / NCIMB 8826 / WCFS1</strain>
    </source>
</reference>
<reference key="2">
    <citation type="journal article" date="2012" name="J. Bacteriol.">
        <title>Complete resequencing and reannotation of the Lactobacillus plantarum WCFS1 genome.</title>
        <authorList>
            <person name="Siezen R.J."/>
            <person name="Francke C."/>
            <person name="Renckens B."/>
            <person name="Boekhorst J."/>
            <person name="Wels M."/>
            <person name="Kleerebezem M."/>
            <person name="van Hijum S.A."/>
        </authorList>
    </citation>
    <scope>NUCLEOTIDE SEQUENCE [LARGE SCALE GENOMIC DNA]</scope>
    <scope>GENOME REANNOTATION</scope>
    <source>
        <strain>ATCC BAA-793 / NCIMB 8826 / WCFS1</strain>
    </source>
</reference>
<feature type="chain" id="PRO_0000073300" description="ATP synthase gamma chain">
    <location>
        <begin position="1"/>
        <end position="314"/>
    </location>
</feature>
<name>ATPG_LACPL</name>
<comment type="function">
    <text evidence="1">Produces ATP from ADP in the presence of a proton gradient across the membrane. The gamma chain is believed to be important in regulating ATPase activity and the flow of protons through the CF(0) complex.</text>
</comment>
<comment type="subunit">
    <text evidence="1">F-type ATPases have 2 components, CF(1) - the catalytic core - and CF(0) - the membrane proton channel. CF(1) has five subunits: alpha(3), beta(3), gamma(1), delta(1), epsilon(1). CF(0) has three main subunits: a, b and c.</text>
</comment>
<comment type="subcellular location">
    <subcellularLocation>
        <location evidence="1">Cell membrane</location>
        <topology evidence="1">Peripheral membrane protein</topology>
    </subcellularLocation>
</comment>
<comment type="similarity">
    <text evidence="1">Belongs to the ATPase gamma chain family.</text>
</comment>
<gene>
    <name evidence="1" type="primary">atpG</name>
    <name type="ordered locus">lp_2365</name>
</gene>
<accession>Q88UU2</accession>
<accession>F9UQR4</accession>
<organism>
    <name type="scientific">Lactiplantibacillus plantarum (strain ATCC BAA-793 / NCIMB 8826 / WCFS1)</name>
    <name type="common">Lactobacillus plantarum</name>
    <dbReference type="NCBI Taxonomy" id="220668"/>
    <lineage>
        <taxon>Bacteria</taxon>
        <taxon>Bacillati</taxon>
        <taxon>Bacillota</taxon>
        <taxon>Bacilli</taxon>
        <taxon>Lactobacillales</taxon>
        <taxon>Lactobacillaceae</taxon>
        <taxon>Lactiplantibacillus</taxon>
    </lineage>
</organism>
<sequence length="314" mass="34522">MAESLMDVKRRIDSTKKTHQITSAMQMVSTSKLNQIQKHTSTYQVYASKVESIVSHLAKAHLMSASAGVANSNSNTISVSELLAQRPVKKTGLLVITSDRGLVGSYNSNVLKQTNDFMRTHKVDADNAVVLAVGGTGADFYKKNGLNVAYEYRGVSDVPTFKEVREIVKTVTSMYHNEVFDELYVFYNHFINRLSSGFRAVKMLPISEETFEQSESDNRKAKDSRVDVGPEYEMEPSEEAILSAVLPQYAESLVYGAILDAKTAEHASSSTAMKAASDNAGDLIDKLNLKYNRARQAAITTEITEITGGLVAQE</sequence>
<evidence type="ECO:0000255" key="1">
    <source>
        <dbReference type="HAMAP-Rule" id="MF_00815"/>
    </source>
</evidence>
<keyword id="KW-0066">ATP synthesis</keyword>
<keyword id="KW-1003">Cell membrane</keyword>
<keyword id="KW-0139">CF(1)</keyword>
<keyword id="KW-0375">Hydrogen ion transport</keyword>
<keyword id="KW-0406">Ion transport</keyword>
<keyword id="KW-0472">Membrane</keyword>
<keyword id="KW-1185">Reference proteome</keyword>
<keyword id="KW-0813">Transport</keyword>
<protein>
    <recommendedName>
        <fullName evidence="1">ATP synthase gamma chain</fullName>
    </recommendedName>
    <alternativeName>
        <fullName evidence="1">ATP synthase F1 sector gamma subunit</fullName>
    </alternativeName>
    <alternativeName>
        <fullName evidence="1">F-ATPase gamma subunit</fullName>
    </alternativeName>
</protein>